<organism>
    <name type="scientific">Lactobacillus acidophilus (strain ATCC 700396 / NCK56 / N2 / NCFM)</name>
    <dbReference type="NCBI Taxonomy" id="272621"/>
    <lineage>
        <taxon>Bacteria</taxon>
        <taxon>Bacillati</taxon>
        <taxon>Bacillota</taxon>
        <taxon>Bacilli</taxon>
        <taxon>Lactobacillales</taxon>
        <taxon>Lactobacillaceae</taxon>
        <taxon>Lactobacillus</taxon>
    </lineage>
</organism>
<reference evidence="6" key="1">
    <citation type="journal article" date="2005" name="Proc. Natl. Acad. Sci. U.S.A.">
        <title>Complete genome sequence of the probiotic lactic acid bacterium Lactobacillus acidophilus NCFM.</title>
        <authorList>
            <person name="Altermann E."/>
            <person name="Russell W.M."/>
            <person name="Azcarate-Peril M.A."/>
            <person name="Barrangou R."/>
            <person name="Buck B.L."/>
            <person name="McAuliffe O."/>
            <person name="Souther N."/>
            <person name="Dobson A."/>
            <person name="Duong T."/>
            <person name="Callanan M."/>
            <person name="Lick S."/>
            <person name="Hamrick A."/>
            <person name="Cano R."/>
            <person name="Klaenhammer T.R."/>
        </authorList>
    </citation>
    <scope>NUCLEOTIDE SEQUENCE [LARGE SCALE GENOMIC DNA]</scope>
    <source>
        <strain>ATCC 700396 / NCK56 / N2 / NCFM</strain>
    </source>
</reference>
<gene>
    <name evidence="3" type="primary">pip</name>
    <name evidence="3" type="synonym">pepI</name>
    <name type="ordered locus">LBA0092</name>
</gene>
<feature type="chain" id="PRO_0000406321" description="Proline iminopeptidase">
    <location>
        <begin position="1"/>
        <end position="293"/>
    </location>
</feature>
<feature type="domain" description="AB hydrolase-1" evidence="5">
    <location>
        <begin position="28"/>
        <end position="277"/>
    </location>
</feature>
<feature type="active site" description="Nucleophile" evidence="4">
    <location>
        <position position="105"/>
    </location>
</feature>
<feature type="active site" evidence="2">
    <location>
        <position position="244"/>
    </location>
</feature>
<feature type="active site" description="Proton donor" evidence="4">
    <location>
        <position position="271"/>
    </location>
</feature>
<evidence type="ECO:0000250" key="1"/>
<evidence type="ECO:0000250" key="2">
    <source>
        <dbReference type="UniProtKB" id="O32449"/>
    </source>
</evidence>
<evidence type="ECO:0000250" key="3">
    <source>
        <dbReference type="UniProtKB" id="P52278"/>
    </source>
</evidence>
<evidence type="ECO:0000250" key="4">
    <source>
        <dbReference type="UniProtKB" id="P96084"/>
    </source>
</evidence>
<evidence type="ECO:0000255" key="5"/>
<evidence type="ECO:0000312" key="6">
    <source>
        <dbReference type="EMBL" id="AAV41993.1"/>
    </source>
</evidence>
<comment type="function">
    <text evidence="3">Releases the N-terminal proline from various substrates.</text>
</comment>
<comment type="catalytic activity">
    <reaction evidence="3">
        <text>Release of N-terminal proline from a peptide.</text>
        <dbReference type="EC" id="3.4.11.5"/>
    </reaction>
</comment>
<comment type="subcellular location">
    <subcellularLocation>
        <location evidence="1">Cell envelope</location>
    </subcellularLocation>
</comment>
<comment type="similarity">
    <text evidence="5">Belongs to the peptidase S33 family.</text>
</comment>
<proteinExistence type="inferred from homology"/>
<protein>
    <recommendedName>
        <fullName evidence="3">Proline iminopeptidase</fullName>
        <shortName evidence="3">PIP</shortName>
        <ecNumber>3.4.11.5</ecNumber>
    </recommendedName>
    <alternativeName>
        <fullName evidence="6">Prolyl aminopeptidase</fullName>
        <shortName evidence="3">PAP</shortName>
    </alternativeName>
</protein>
<keyword id="KW-0031">Aminopeptidase</keyword>
<keyword id="KW-0378">Hydrolase</keyword>
<keyword id="KW-0645">Protease</keyword>
<keyword id="KW-1185">Reference proteome</keyword>
<name>PIP_LACAC</name>
<dbReference type="EC" id="3.4.11.5"/>
<dbReference type="EMBL" id="CP000033">
    <property type="protein sequence ID" value="AAV41993.1"/>
    <property type="molecule type" value="Genomic_DNA"/>
</dbReference>
<dbReference type="RefSeq" id="WP_003548604.1">
    <property type="nucleotide sequence ID" value="NC_006814.3"/>
</dbReference>
<dbReference type="RefSeq" id="YP_193024.1">
    <property type="nucleotide sequence ID" value="NC_006814.3"/>
</dbReference>
<dbReference type="SMR" id="Q5FMT1"/>
<dbReference type="STRING" id="272621.LBA0092"/>
<dbReference type="ESTHER" id="lacac-pip">
    <property type="family name" value="Proline_iminopeptidase"/>
</dbReference>
<dbReference type="MEROPS" id="S33.021"/>
<dbReference type="GeneID" id="93290795"/>
<dbReference type="KEGG" id="lac:LBA0092"/>
<dbReference type="PATRIC" id="fig|272621.13.peg.88"/>
<dbReference type="eggNOG" id="COG2267">
    <property type="taxonomic scope" value="Bacteria"/>
</dbReference>
<dbReference type="HOGENOM" id="CLU_020336_15_1_9"/>
<dbReference type="OrthoDB" id="9796770at2"/>
<dbReference type="BioCyc" id="LACI272621:G1G49-92-MONOMER"/>
<dbReference type="BRENDA" id="3.4.11.5">
    <property type="organism ID" value="2846"/>
</dbReference>
<dbReference type="Proteomes" id="UP000006381">
    <property type="component" value="Chromosome"/>
</dbReference>
<dbReference type="GO" id="GO:0030313">
    <property type="term" value="C:cell envelope"/>
    <property type="evidence" value="ECO:0007669"/>
    <property type="project" value="UniProtKB-SubCell"/>
</dbReference>
<dbReference type="GO" id="GO:0016020">
    <property type="term" value="C:membrane"/>
    <property type="evidence" value="ECO:0007669"/>
    <property type="project" value="TreeGrafter"/>
</dbReference>
<dbReference type="GO" id="GO:0004177">
    <property type="term" value="F:aminopeptidase activity"/>
    <property type="evidence" value="ECO:0007669"/>
    <property type="project" value="UniProtKB-KW"/>
</dbReference>
<dbReference type="GO" id="GO:0006508">
    <property type="term" value="P:proteolysis"/>
    <property type="evidence" value="ECO:0007669"/>
    <property type="project" value="UniProtKB-KW"/>
</dbReference>
<dbReference type="Gene3D" id="3.40.50.1820">
    <property type="entry name" value="alpha/beta hydrolase"/>
    <property type="match status" value="1"/>
</dbReference>
<dbReference type="InterPro" id="IPR000073">
    <property type="entry name" value="AB_hydrolase_1"/>
</dbReference>
<dbReference type="InterPro" id="IPR029058">
    <property type="entry name" value="AB_hydrolase_fold"/>
</dbReference>
<dbReference type="InterPro" id="IPR050266">
    <property type="entry name" value="AB_hydrolase_sf"/>
</dbReference>
<dbReference type="InterPro" id="IPR002410">
    <property type="entry name" value="Peptidase_S33"/>
</dbReference>
<dbReference type="InterPro" id="IPR005945">
    <property type="entry name" value="Pro_imino_pep"/>
</dbReference>
<dbReference type="NCBIfam" id="TIGR01250">
    <property type="entry name" value="pro_imino_pep_2"/>
    <property type="match status" value="1"/>
</dbReference>
<dbReference type="NCBIfam" id="NF045945">
    <property type="entry name" value="ProImpepLactob"/>
    <property type="match status" value="1"/>
</dbReference>
<dbReference type="PANTHER" id="PTHR43798:SF31">
    <property type="entry name" value="AB HYDROLASE SUPERFAMILY PROTEIN YCLE"/>
    <property type="match status" value="1"/>
</dbReference>
<dbReference type="PANTHER" id="PTHR43798">
    <property type="entry name" value="MONOACYLGLYCEROL LIPASE"/>
    <property type="match status" value="1"/>
</dbReference>
<dbReference type="Pfam" id="PF00561">
    <property type="entry name" value="Abhydrolase_1"/>
    <property type="match status" value="1"/>
</dbReference>
<dbReference type="PIRSF" id="PIRSF005539">
    <property type="entry name" value="Pept_S33_TRI_F1"/>
    <property type="match status" value="1"/>
</dbReference>
<dbReference type="PRINTS" id="PR00793">
    <property type="entry name" value="PROAMNOPTASE"/>
</dbReference>
<dbReference type="SUPFAM" id="SSF53474">
    <property type="entry name" value="alpha/beta-Hydrolases"/>
    <property type="match status" value="1"/>
</dbReference>
<sequence length="293" mass="33830">MEIIEGKMPFMGYETHYRIVGRRSEKSPLVLLHGGPGSTHNYFEVLDKLAKIDDRRIIMYDQLGCGNSSIPDDHPELYTKETWVKELKTLREHLALRKIHLLGQSWGGMLAIIYMCDYHPEGIQSLILSSTLSSASLWSKELHRMIKYLPIEEQAAIHRAELTDTFTEPDYLKANEHFMNQHAIDMKKKWPECVMREKKGGTVAYETAWGPNEYTPEGNLHDYEYTDQLSKIKVPTLITSGTDDLCTPYVAKTMHDHIAGSQWKLFENCSHMSFVQKTDEYIAMLKKWLDAND</sequence>
<accession>Q5FMT1</accession>